<proteinExistence type="inferred from homology"/>
<keyword id="KW-0378">Hydrolase</keyword>
<gene>
    <name evidence="1" type="primary">rppH</name>
    <name evidence="1" type="synonym">nudH</name>
    <name type="ordered locus">YPN_2991</name>
    <name type="ORF">YP516_3387</name>
</gene>
<reference key="1">
    <citation type="journal article" date="2006" name="J. Bacteriol.">
        <title>Complete genome sequence of Yersinia pestis strains Antiqua and Nepal516: evidence of gene reduction in an emerging pathogen.</title>
        <authorList>
            <person name="Chain P.S.G."/>
            <person name="Hu P."/>
            <person name="Malfatti S.A."/>
            <person name="Radnedge L."/>
            <person name="Larimer F."/>
            <person name="Vergez L.M."/>
            <person name="Worsham P."/>
            <person name="Chu M.C."/>
            <person name="Andersen G.L."/>
        </authorList>
    </citation>
    <scope>NUCLEOTIDE SEQUENCE [LARGE SCALE GENOMIC DNA]</scope>
    <source>
        <strain>Nepal516</strain>
    </source>
</reference>
<reference key="2">
    <citation type="submission" date="2009-04" db="EMBL/GenBank/DDBJ databases">
        <title>Yersinia pestis Nepal516A whole genome shotgun sequencing project.</title>
        <authorList>
            <person name="Plunkett G. III"/>
            <person name="Anderson B.D."/>
            <person name="Baumler D.J."/>
            <person name="Burland V."/>
            <person name="Cabot E.L."/>
            <person name="Glasner J.D."/>
            <person name="Mau B."/>
            <person name="Neeno-Eckwall E."/>
            <person name="Perna N.T."/>
            <person name="Munk A.C."/>
            <person name="Tapia R."/>
            <person name="Green L.D."/>
            <person name="Rogers Y.C."/>
            <person name="Detter J.C."/>
            <person name="Bruce D.C."/>
            <person name="Brettin T.S."/>
        </authorList>
    </citation>
    <scope>NUCLEOTIDE SEQUENCE [LARGE SCALE GENOMIC DNA]</scope>
    <source>
        <strain>Nepal516</strain>
    </source>
</reference>
<accession>Q1CFB2</accession>
<accession>C4GX17</accession>
<evidence type="ECO:0000255" key="1">
    <source>
        <dbReference type="HAMAP-Rule" id="MF_00298"/>
    </source>
</evidence>
<comment type="function">
    <text evidence="1">Accelerates the degradation of transcripts by removing pyrophosphate from the 5'-end of triphosphorylated RNA, leading to a more labile monophosphorylated state that can stimulate subsequent ribonuclease cleavage.</text>
</comment>
<comment type="cofactor">
    <cofactor evidence="1">
        <name>a divalent metal cation</name>
        <dbReference type="ChEBI" id="CHEBI:60240"/>
    </cofactor>
</comment>
<comment type="similarity">
    <text evidence="1">Belongs to the Nudix hydrolase family. RppH subfamily.</text>
</comment>
<dbReference type="EC" id="3.6.1.-" evidence="1"/>
<dbReference type="EMBL" id="CP000305">
    <property type="protein sequence ID" value="ABG19318.1"/>
    <property type="molecule type" value="Genomic_DNA"/>
</dbReference>
<dbReference type="EMBL" id="ACNQ01000017">
    <property type="protein sequence ID" value="EEO75467.1"/>
    <property type="molecule type" value="Genomic_DNA"/>
</dbReference>
<dbReference type="RefSeq" id="WP_002211381.1">
    <property type="nucleotide sequence ID" value="NZ_ACNQ01000017.1"/>
</dbReference>
<dbReference type="SMR" id="Q1CFB2"/>
<dbReference type="GeneID" id="57973848"/>
<dbReference type="KEGG" id="ypn:YPN_2991"/>
<dbReference type="HOGENOM" id="CLU_087195_3_2_6"/>
<dbReference type="Proteomes" id="UP000008936">
    <property type="component" value="Chromosome"/>
</dbReference>
<dbReference type="GO" id="GO:0005737">
    <property type="term" value="C:cytoplasm"/>
    <property type="evidence" value="ECO:0007669"/>
    <property type="project" value="TreeGrafter"/>
</dbReference>
<dbReference type="GO" id="GO:0034353">
    <property type="term" value="F:mRNA 5'-diphosphatase activity"/>
    <property type="evidence" value="ECO:0007669"/>
    <property type="project" value="TreeGrafter"/>
</dbReference>
<dbReference type="GO" id="GO:0006402">
    <property type="term" value="P:mRNA catabolic process"/>
    <property type="evidence" value="ECO:0007669"/>
    <property type="project" value="TreeGrafter"/>
</dbReference>
<dbReference type="CDD" id="cd03671">
    <property type="entry name" value="NUDIX_Ap4A_hydrolase_plant_like"/>
    <property type="match status" value="1"/>
</dbReference>
<dbReference type="FunFam" id="3.90.79.10:FF:000001">
    <property type="entry name" value="RNA pyrophosphohydrolase"/>
    <property type="match status" value="1"/>
</dbReference>
<dbReference type="Gene3D" id="3.90.79.10">
    <property type="entry name" value="Nucleoside Triphosphate Pyrophosphohydrolase"/>
    <property type="match status" value="1"/>
</dbReference>
<dbReference type="HAMAP" id="MF_00298">
    <property type="entry name" value="Nudix_RppH"/>
    <property type="match status" value="1"/>
</dbReference>
<dbReference type="InterPro" id="IPR020476">
    <property type="entry name" value="Nudix_hydrolase"/>
</dbReference>
<dbReference type="InterPro" id="IPR015797">
    <property type="entry name" value="NUDIX_hydrolase-like_dom_sf"/>
</dbReference>
<dbReference type="InterPro" id="IPR020084">
    <property type="entry name" value="NUDIX_hydrolase_CS"/>
</dbReference>
<dbReference type="InterPro" id="IPR000086">
    <property type="entry name" value="NUDIX_hydrolase_dom"/>
</dbReference>
<dbReference type="InterPro" id="IPR022927">
    <property type="entry name" value="RppH"/>
</dbReference>
<dbReference type="NCBIfam" id="NF001934">
    <property type="entry name" value="PRK00714.1-1"/>
    <property type="match status" value="1"/>
</dbReference>
<dbReference type="NCBIfam" id="NF001937">
    <property type="entry name" value="PRK00714.1-4"/>
    <property type="match status" value="1"/>
</dbReference>
<dbReference type="NCBIfam" id="NF001938">
    <property type="entry name" value="PRK00714.1-5"/>
    <property type="match status" value="1"/>
</dbReference>
<dbReference type="PANTHER" id="PTHR23114">
    <property type="entry name" value="M7GPPPN-MRNA HYDROLASE"/>
    <property type="match status" value="1"/>
</dbReference>
<dbReference type="PANTHER" id="PTHR23114:SF17">
    <property type="entry name" value="M7GPPPN-MRNA HYDROLASE"/>
    <property type="match status" value="1"/>
</dbReference>
<dbReference type="Pfam" id="PF00293">
    <property type="entry name" value="NUDIX"/>
    <property type="match status" value="1"/>
</dbReference>
<dbReference type="PRINTS" id="PR00502">
    <property type="entry name" value="NUDIXFAMILY"/>
</dbReference>
<dbReference type="SUPFAM" id="SSF55811">
    <property type="entry name" value="Nudix"/>
    <property type="match status" value="1"/>
</dbReference>
<dbReference type="PROSITE" id="PS51462">
    <property type="entry name" value="NUDIX"/>
    <property type="match status" value="1"/>
</dbReference>
<dbReference type="PROSITE" id="PS00893">
    <property type="entry name" value="NUDIX_BOX"/>
    <property type="match status" value="1"/>
</dbReference>
<feature type="chain" id="PRO_1000022010" description="RNA pyrophosphohydrolase">
    <location>
        <begin position="1"/>
        <end position="175"/>
    </location>
</feature>
<feature type="domain" description="Nudix hydrolase" evidence="1">
    <location>
        <begin position="6"/>
        <end position="149"/>
    </location>
</feature>
<feature type="short sequence motif" description="Nudix box">
    <location>
        <begin position="38"/>
        <end position="59"/>
    </location>
</feature>
<protein>
    <recommendedName>
        <fullName evidence="1">RNA pyrophosphohydrolase</fullName>
        <ecNumber evidence="1">3.6.1.-</ecNumber>
    </recommendedName>
    <alternativeName>
        <fullName evidence="1">(Di)nucleoside polyphosphate hydrolase</fullName>
    </alternativeName>
</protein>
<organism>
    <name type="scientific">Yersinia pestis bv. Antiqua (strain Nepal516)</name>
    <dbReference type="NCBI Taxonomy" id="377628"/>
    <lineage>
        <taxon>Bacteria</taxon>
        <taxon>Pseudomonadati</taxon>
        <taxon>Pseudomonadota</taxon>
        <taxon>Gammaproteobacteria</taxon>
        <taxon>Enterobacterales</taxon>
        <taxon>Yersiniaceae</taxon>
        <taxon>Yersinia</taxon>
    </lineage>
</organism>
<sequence>MIDDDGYRPNVGIVICNRQGEVLWARRYGQHSWQFPQGGINPGETPEQAMYRELFEEVGLNKKDVRILASTRNWLRYKLPKRLVRWDTKPVCIGQKQRWFLLQLMCNEAEINMQRSSTPEFDGWRWVSYWYPVRQVVSFKRDVYRRVMKEFAATVMPVQEVAPPRVPPAYRRKRG</sequence>
<name>RPPH_YERPN</name>